<gene>
    <name type="primary">STAG1</name>
    <name type="synonym">SA1</name>
    <name evidence="12" type="synonym">SCC3</name>
</gene>
<name>STAG1_HUMAN</name>
<keyword id="KW-0002">3D-structure</keyword>
<keyword id="KW-0025">Alternative splicing</keyword>
<keyword id="KW-0131">Cell cycle</keyword>
<keyword id="KW-0132">Cell division</keyword>
<keyword id="KW-0137">Centromere</keyword>
<keyword id="KW-0158">Chromosome</keyword>
<keyword id="KW-0159">Chromosome partition</keyword>
<keyword id="KW-0225">Disease variant</keyword>
<keyword id="KW-0991">Intellectual disability</keyword>
<keyword id="KW-1017">Isopeptide bond</keyword>
<keyword id="KW-0498">Mitosis</keyword>
<keyword id="KW-0539">Nucleus</keyword>
<keyword id="KW-0597">Phosphoprotein</keyword>
<keyword id="KW-1267">Proteomics identification</keyword>
<keyword id="KW-1185">Reference proteome</keyword>
<keyword id="KW-0832">Ubl conjugation</keyword>
<proteinExistence type="evidence at protein level"/>
<protein>
    <recommendedName>
        <fullName>Cohesin subunit SA-1</fullName>
    </recommendedName>
    <alternativeName>
        <fullName>SCC3 homolog 1</fullName>
    </alternativeName>
    <alternativeName>
        <fullName>Stromal antigen 1</fullName>
    </alternativeName>
</protein>
<feature type="chain" id="PRO_0000120182" description="Cohesin subunit SA-1">
    <location>
        <begin position="1"/>
        <end position="1258"/>
    </location>
</feature>
<feature type="domain" description="SCD" evidence="4">
    <location>
        <begin position="296"/>
        <end position="381"/>
    </location>
</feature>
<feature type="region of interest" description="Disordered" evidence="5">
    <location>
        <begin position="1"/>
        <end position="84"/>
    </location>
</feature>
<feature type="region of interest" description="Disordered" evidence="5">
    <location>
        <begin position="1055"/>
        <end position="1096"/>
    </location>
</feature>
<feature type="region of interest" description="Disordered" evidence="5">
    <location>
        <begin position="1129"/>
        <end position="1148"/>
    </location>
</feature>
<feature type="compositionally biased region" description="Polar residues" evidence="5">
    <location>
        <begin position="10"/>
        <end position="19"/>
    </location>
</feature>
<feature type="compositionally biased region" description="Basic and acidic residues" evidence="5">
    <location>
        <begin position="53"/>
        <end position="62"/>
    </location>
</feature>
<feature type="compositionally biased region" description="Low complexity" evidence="5">
    <location>
        <begin position="1062"/>
        <end position="1074"/>
    </location>
</feature>
<feature type="compositionally biased region" description="Basic residues" evidence="5">
    <location>
        <begin position="1076"/>
        <end position="1087"/>
    </location>
</feature>
<feature type="compositionally biased region" description="Basic and acidic residues" evidence="5">
    <location>
        <begin position="1137"/>
        <end position="1146"/>
    </location>
</feature>
<feature type="modified residue" description="Phosphoserine" evidence="16">
    <location>
        <position position="24"/>
    </location>
</feature>
<feature type="modified residue" description="Phosphoserine" evidence="17">
    <location>
        <position position="756"/>
    </location>
</feature>
<feature type="modified residue" description="Phosphoserine" evidence="15">
    <location>
        <position position="1062"/>
    </location>
</feature>
<feature type="modified residue" description="Phosphoserine" evidence="2">
    <location>
        <position position="1065"/>
    </location>
</feature>
<feature type="modified residue" description="Phosphoserine" evidence="17">
    <location>
        <position position="1093"/>
    </location>
</feature>
<feature type="cross-link" description="Glycyl lysine isopeptide (Lys-Gly) (interchain with G-Cter in SUMO2)" evidence="18">
    <location>
        <position position="1161"/>
    </location>
</feature>
<feature type="splice variant" id="VSP_054496" description="In isoform 2." evidence="11">
    <location>
        <begin position="1150"/>
        <end position="1186"/>
    </location>
</feature>
<feature type="sequence variant" id="VAR_082291" description="Found in a patient with cohesinopathy; uncertain significance; dbSNP:rs1559904167." evidence="9">
    <original>V</original>
    <variation>I</variation>
    <location>
        <position position="85"/>
    </location>
</feature>
<feature type="sequence variant" id="VAR_079487" description="In MRD47; dbSNP:rs1553738694." evidence="8">
    <original>Q</original>
    <variation>R</variation>
    <location>
        <position position="214"/>
    </location>
</feature>
<feature type="sequence variant" id="VAR_079488" description="In MRD47; dbSNP:rs1553738686." evidence="8">
    <original>R</original>
    <variation>G</variation>
    <location>
        <position position="216"/>
    </location>
</feature>
<feature type="sequence variant" id="VAR_079489" description="In MRD47; dbSNP:rs1057519153." evidence="8">
    <original>H</original>
    <variation>R</variation>
    <location>
        <position position="220"/>
    </location>
</feature>
<feature type="sequence variant" id="VAR_079490" description="In MRD47; dbSNP:rs1553728634." evidence="8">
    <original>K</original>
    <variation>Q</variation>
    <location>
        <position position="333"/>
    </location>
</feature>
<feature type="sequence variant" id="VAR_079491" description="In MRD47; dbSNP:rs1553727865." evidence="8">
    <original>L</original>
    <variation>W</variation>
    <location>
        <position position="351"/>
    </location>
</feature>
<feature type="sequence variant" id="VAR_079492" description="In MRD47; dbSNP:rs1376334317." evidence="8">
    <original>R</original>
    <variation>Q</variation>
    <location>
        <position position="373"/>
    </location>
</feature>
<feature type="sequence variant" id="VAR_082292" description="Found in a patient with cohesinopathy; dbSNP:rs1559824939." evidence="9">
    <original>R</original>
    <variation>C</variation>
    <location>
        <position position="377"/>
    </location>
</feature>
<feature type="sequence variant" id="VAR_079493" description="In MRD47; dbSNP:rs1553722309." evidence="8">
    <original>H</original>
    <variation>P</variation>
    <location>
        <position position="478"/>
    </location>
</feature>
<feature type="sequence variant" id="VAR_079494" description="In MRD47; dbSNP:rs1471479119." evidence="8">
    <original>K</original>
    <variation>R</variation>
    <location>
        <position position="979"/>
    </location>
</feature>
<feature type="sequence variant" id="VAR_046968" description="In dbSNP:rs34149860.">
    <original>Q</original>
    <variation>H</variation>
    <location>
        <position position="1132"/>
    </location>
</feature>
<feature type="sequence conflict" description="In Ref. 1; CAA99731." evidence="13" ref="1">
    <original>S</original>
    <variation>N</variation>
    <location>
        <position position="645"/>
    </location>
</feature>
<feature type="sequence conflict" description="In Ref. 1; CAA99731." evidence="13" ref="1">
    <original>H</original>
    <variation>Q</variation>
    <location>
        <position position="702"/>
    </location>
</feature>
<feature type="helix" evidence="22">
    <location>
        <begin position="87"/>
        <end position="93"/>
    </location>
</feature>
<feature type="helix" evidence="22">
    <location>
        <begin position="97"/>
        <end position="111"/>
    </location>
</feature>
<feature type="helix" evidence="22">
    <location>
        <begin position="113"/>
        <end position="127"/>
    </location>
</feature>
<feature type="helix" evidence="22">
    <location>
        <begin position="136"/>
        <end position="141"/>
    </location>
</feature>
<feature type="helix" evidence="22">
    <location>
        <begin position="144"/>
        <end position="152"/>
    </location>
</feature>
<feature type="strand" evidence="24">
    <location>
        <begin position="158"/>
        <end position="160"/>
    </location>
</feature>
<feature type="helix" evidence="22">
    <location>
        <begin position="163"/>
        <end position="165"/>
    </location>
</feature>
<feature type="turn" evidence="22">
    <location>
        <begin position="170"/>
        <end position="173"/>
    </location>
</feature>
<feature type="helix" evidence="22">
    <location>
        <begin position="174"/>
        <end position="189"/>
    </location>
</feature>
<feature type="turn" evidence="22">
    <location>
        <begin position="190"/>
        <end position="192"/>
    </location>
</feature>
<feature type="helix" evidence="22">
    <location>
        <begin position="193"/>
        <end position="195"/>
    </location>
</feature>
<feature type="strand" evidence="22">
    <location>
        <begin position="196"/>
        <end position="198"/>
    </location>
</feature>
<feature type="helix" evidence="22">
    <location>
        <begin position="199"/>
        <end position="211"/>
    </location>
</feature>
<feature type="helix" evidence="22">
    <location>
        <begin position="216"/>
        <end position="255"/>
    </location>
</feature>
<feature type="turn" evidence="22">
    <location>
        <begin position="259"/>
        <end position="261"/>
    </location>
</feature>
<feature type="helix" evidence="22">
    <location>
        <begin position="265"/>
        <end position="294"/>
    </location>
</feature>
<feature type="helix" evidence="22">
    <location>
        <begin position="296"/>
        <end position="299"/>
    </location>
</feature>
<feature type="strand" evidence="24">
    <location>
        <begin position="302"/>
        <end position="304"/>
    </location>
</feature>
<feature type="helix" evidence="22">
    <location>
        <begin position="305"/>
        <end position="321"/>
    </location>
</feature>
<feature type="helix" evidence="22">
    <location>
        <begin position="323"/>
        <end position="326"/>
    </location>
</feature>
<feature type="helix" evidence="22">
    <location>
        <begin position="329"/>
        <end position="338"/>
    </location>
</feature>
<feature type="helix" evidence="22">
    <location>
        <begin position="344"/>
        <end position="358"/>
    </location>
</feature>
<feature type="helix" evidence="22">
    <location>
        <begin position="361"/>
        <end position="367"/>
    </location>
</feature>
<feature type="helix" evidence="22">
    <location>
        <begin position="368"/>
        <end position="380"/>
    </location>
</feature>
<feature type="helix" evidence="22">
    <location>
        <begin position="381"/>
        <end position="383"/>
    </location>
</feature>
<feature type="helix" evidence="22">
    <location>
        <begin position="387"/>
        <end position="403"/>
    </location>
</feature>
<feature type="helix" evidence="24">
    <location>
        <begin position="405"/>
        <end position="407"/>
    </location>
</feature>
<feature type="helix" evidence="24">
    <location>
        <begin position="410"/>
        <end position="416"/>
    </location>
</feature>
<feature type="helix" evidence="23">
    <location>
        <begin position="460"/>
        <end position="474"/>
    </location>
</feature>
<feature type="helix" evidence="25">
    <location>
        <begin position="478"/>
        <end position="480"/>
    </location>
</feature>
<feature type="helix" evidence="23">
    <location>
        <begin position="481"/>
        <end position="496"/>
    </location>
</feature>
<feature type="helix" evidence="23">
    <location>
        <begin position="499"/>
        <end position="507"/>
    </location>
</feature>
<feature type="helix" evidence="23">
    <location>
        <begin position="519"/>
        <end position="538"/>
    </location>
</feature>
<feature type="turn" evidence="20">
    <location>
        <begin position="543"/>
        <end position="545"/>
    </location>
</feature>
<feature type="helix" evidence="23">
    <location>
        <begin position="554"/>
        <end position="581"/>
    </location>
</feature>
<feature type="turn" evidence="23">
    <location>
        <begin position="582"/>
        <end position="584"/>
    </location>
</feature>
<feature type="helix" evidence="23">
    <location>
        <begin position="586"/>
        <end position="592"/>
    </location>
</feature>
<feature type="helix" evidence="23">
    <location>
        <begin position="596"/>
        <end position="598"/>
    </location>
</feature>
<feature type="helix" evidence="23">
    <location>
        <begin position="603"/>
        <end position="606"/>
    </location>
</feature>
<feature type="helix" evidence="23">
    <location>
        <begin position="610"/>
        <end position="626"/>
    </location>
</feature>
<feature type="helix" evidence="23">
    <location>
        <begin position="630"/>
        <end position="643"/>
    </location>
</feature>
<feature type="helix" evidence="23">
    <location>
        <begin position="648"/>
        <end position="677"/>
    </location>
</feature>
<feature type="turn" evidence="23">
    <location>
        <begin position="680"/>
        <end position="682"/>
    </location>
</feature>
<feature type="helix" evidence="23">
    <location>
        <begin position="685"/>
        <end position="701"/>
    </location>
</feature>
<feature type="turn" evidence="23">
    <location>
        <begin position="702"/>
        <end position="704"/>
    </location>
</feature>
<feature type="helix" evidence="21">
    <location>
        <begin position="707"/>
        <end position="709"/>
    </location>
</feature>
<feature type="helix" evidence="23">
    <location>
        <begin position="712"/>
        <end position="725"/>
    </location>
</feature>
<feature type="helix" evidence="23">
    <location>
        <begin position="731"/>
        <end position="754"/>
    </location>
</feature>
<feature type="helix" evidence="23">
    <location>
        <begin position="759"/>
        <end position="779"/>
    </location>
</feature>
<feature type="strand" evidence="19">
    <location>
        <begin position="782"/>
        <end position="784"/>
    </location>
</feature>
<feature type="helix" evidence="23">
    <location>
        <begin position="785"/>
        <end position="801"/>
    </location>
</feature>
<feature type="helix" evidence="23">
    <location>
        <begin position="804"/>
        <end position="807"/>
    </location>
</feature>
<feature type="turn" evidence="25">
    <location>
        <begin position="808"/>
        <end position="810"/>
    </location>
</feature>
<feature type="helix" evidence="23">
    <location>
        <begin position="812"/>
        <end position="817"/>
    </location>
</feature>
<feature type="helix" evidence="23">
    <location>
        <begin position="823"/>
        <end position="836"/>
    </location>
</feature>
<feature type="helix" evidence="23">
    <location>
        <begin position="856"/>
        <end position="877"/>
    </location>
</feature>
<feature type="helix" evidence="23">
    <location>
        <begin position="883"/>
        <end position="893"/>
    </location>
</feature>
<feature type="helix" evidence="23">
    <location>
        <begin position="895"/>
        <end position="909"/>
    </location>
</feature>
<reference key="1">
    <citation type="journal article" date="1997" name="Gene">
        <title>SA-1, a nuclear protein encoded by one member of a novel gene family: molecular cloning and detection in hemopoietic organs.</title>
        <authorList>
            <person name="Carramolino L."/>
            <person name="Lee B.C."/>
            <person name="Zaballos A."/>
            <person name="Peled A."/>
            <person name="Barthelemy I."/>
            <person name="Shav-Tal Y."/>
            <person name="Prieto I."/>
            <person name="Carmi P."/>
            <person name="Gothelf Y."/>
            <person name="Gonzalez de Buitrago G."/>
            <person name="Aracil M."/>
            <person name="Marquez G."/>
            <person name="Barbero J.L."/>
            <person name="Zipori D."/>
        </authorList>
    </citation>
    <scope>NUCLEOTIDE SEQUENCE [MRNA] (ISOFORM 1)</scope>
    <source>
        <tissue>Thymus</tissue>
    </source>
</reference>
<reference key="2">
    <citation type="journal article" date="1998" name="Gene">
        <authorList>
            <person name="Carramolino L."/>
            <person name="Lee B.C."/>
            <person name="Zaballos A."/>
            <person name="Peled A."/>
            <person name="Barthelemy I."/>
            <person name="Shav-Tal Y."/>
            <person name="Prieto I."/>
            <person name="Carmi P."/>
            <person name="Gothelf Y."/>
            <person name="Gonzalez de Buitrago G."/>
            <person name="Aracil M."/>
            <person name="Marquez G."/>
            <person name="Barbero J.L."/>
            <person name="Zipori D."/>
        </authorList>
    </citation>
    <scope>ERRATUM OF PUBMED:9305759</scope>
</reference>
<reference key="3">
    <citation type="journal article" date="2006" name="Nature">
        <title>The DNA sequence, annotation and analysis of human chromosome 3.</title>
        <authorList>
            <person name="Muzny D.M."/>
            <person name="Scherer S.E."/>
            <person name="Kaul R."/>
            <person name="Wang J."/>
            <person name="Yu J."/>
            <person name="Sudbrak R."/>
            <person name="Buhay C.J."/>
            <person name="Chen R."/>
            <person name="Cree A."/>
            <person name="Ding Y."/>
            <person name="Dugan-Rocha S."/>
            <person name="Gill R."/>
            <person name="Gunaratne P."/>
            <person name="Harris R.A."/>
            <person name="Hawes A.C."/>
            <person name="Hernandez J."/>
            <person name="Hodgson A.V."/>
            <person name="Hume J."/>
            <person name="Jackson A."/>
            <person name="Khan Z.M."/>
            <person name="Kovar-Smith C."/>
            <person name="Lewis L.R."/>
            <person name="Lozado R.J."/>
            <person name="Metzker M.L."/>
            <person name="Milosavljevic A."/>
            <person name="Miner G.R."/>
            <person name="Morgan M.B."/>
            <person name="Nazareth L.V."/>
            <person name="Scott G."/>
            <person name="Sodergren E."/>
            <person name="Song X.-Z."/>
            <person name="Steffen D."/>
            <person name="Wei S."/>
            <person name="Wheeler D.A."/>
            <person name="Wright M.W."/>
            <person name="Worley K.C."/>
            <person name="Yuan Y."/>
            <person name="Zhang Z."/>
            <person name="Adams C.Q."/>
            <person name="Ansari-Lari M.A."/>
            <person name="Ayele M."/>
            <person name="Brown M.J."/>
            <person name="Chen G."/>
            <person name="Chen Z."/>
            <person name="Clendenning J."/>
            <person name="Clerc-Blankenburg K.P."/>
            <person name="Chen R."/>
            <person name="Chen Z."/>
            <person name="Davis C."/>
            <person name="Delgado O."/>
            <person name="Dinh H.H."/>
            <person name="Dong W."/>
            <person name="Draper H."/>
            <person name="Ernst S."/>
            <person name="Fu G."/>
            <person name="Gonzalez-Garay M.L."/>
            <person name="Garcia D.K."/>
            <person name="Gillett W."/>
            <person name="Gu J."/>
            <person name="Hao B."/>
            <person name="Haugen E."/>
            <person name="Havlak P."/>
            <person name="He X."/>
            <person name="Hennig S."/>
            <person name="Hu S."/>
            <person name="Huang W."/>
            <person name="Jackson L.R."/>
            <person name="Jacob L.S."/>
            <person name="Kelly S.H."/>
            <person name="Kube M."/>
            <person name="Levy R."/>
            <person name="Li Z."/>
            <person name="Liu B."/>
            <person name="Liu J."/>
            <person name="Liu W."/>
            <person name="Lu J."/>
            <person name="Maheshwari M."/>
            <person name="Nguyen B.-V."/>
            <person name="Okwuonu G.O."/>
            <person name="Palmeiri A."/>
            <person name="Pasternak S."/>
            <person name="Perez L.M."/>
            <person name="Phelps K.A."/>
            <person name="Plopper F.J."/>
            <person name="Qiang B."/>
            <person name="Raymond C."/>
            <person name="Rodriguez R."/>
            <person name="Saenphimmachak C."/>
            <person name="Santibanez J."/>
            <person name="Shen H."/>
            <person name="Shen Y."/>
            <person name="Subramanian S."/>
            <person name="Tabor P.E."/>
            <person name="Verduzco D."/>
            <person name="Waldron L."/>
            <person name="Wang J."/>
            <person name="Wang J."/>
            <person name="Wang Q."/>
            <person name="Williams G.A."/>
            <person name="Wong G.K.-S."/>
            <person name="Yao Z."/>
            <person name="Zhang J."/>
            <person name="Zhang X."/>
            <person name="Zhao G."/>
            <person name="Zhou J."/>
            <person name="Zhou Y."/>
            <person name="Nelson D."/>
            <person name="Lehrach H."/>
            <person name="Reinhardt R."/>
            <person name="Naylor S.L."/>
            <person name="Yang H."/>
            <person name="Olson M."/>
            <person name="Weinstock G."/>
            <person name="Gibbs R.A."/>
        </authorList>
    </citation>
    <scope>NUCLEOTIDE SEQUENCE [LARGE SCALE GENOMIC DNA]</scope>
</reference>
<reference key="4">
    <citation type="journal article" date="2004" name="Genome Res.">
        <title>The status, quality, and expansion of the NIH full-length cDNA project: the Mammalian Gene Collection (MGC).</title>
        <authorList>
            <consortium name="The MGC Project Team"/>
        </authorList>
    </citation>
    <scope>NUCLEOTIDE SEQUENCE [LARGE SCALE MRNA] (ISOFORM 2)</scope>
    <scope>NUCLEOTIDE SEQUENCE [LARGE SCALE MRNA] OF 787-1258 (ISOFORM 1)</scope>
    <source>
        <tissue>Placenta</tissue>
    </source>
</reference>
<reference key="5">
    <citation type="journal article" date="2000" name="J. Cell Biol.">
        <title>Characterization of vertebrate cohesin complexes and their regulation in prophase.</title>
        <authorList>
            <person name="Sumara I."/>
            <person name="Vorlaufer E."/>
            <person name="Gieffers C."/>
            <person name="Peters B.H."/>
            <person name="Peters J.-M."/>
        </authorList>
    </citation>
    <scope>IDENTIFICATION IN A COHESIN COMPLEX WITH SMC1A AND SMC3</scope>
</reference>
<reference key="6">
    <citation type="journal article" date="2008" name="Proc. Natl. Acad. Sci. U.S.A.">
        <title>A quantitative atlas of mitotic phosphorylation.</title>
        <authorList>
            <person name="Dephoure N."/>
            <person name="Zhou C."/>
            <person name="Villen J."/>
            <person name="Beausoleil S.A."/>
            <person name="Bakalarski C.E."/>
            <person name="Elledge S.J."/>
            <person name="Gygi S.P."/>
        </authorList>
    </citation>
    <scope>PHOSPHORYLATION [LARGE SCALE ANALYSIS] AT SER-1062</scope>
    <scope>IDENTIFICATION BY MASS SPECTROMETRY [LARGE SCALE ANALYSIS]</scope>
    <source>
        <tissue>Cervix carcinoma</tissue>
    </source>
</reference>
<reference key="7">
    <citation type="journal article" date="2009" name="Sci. Signal.">
        <title>Quantitative phosphoproteomic analysis of T cell receptor signaling reveals system-wide modulation of protein-protein interactions.</title>
        <authorList>
            <person name="Mayya V."/>
            <person name="Lundgren D.H."/>
            <person name="Hwang S.-I."/>
            <person name="Rezaul K."/>
            <person name="Wu L."/>
            <person name="Eng J.K."/>
            <person name="Rodionov V."/>
            <person name="Han D.K."/>
        </authorList>
    </citation>
    <scope>PHOSPHORYLATION [LARGE SCALE ANALYSIS] AT SER-24</scope>
    <scope>IDENTIFICATION BY MASS SPECTROMETRY [LARGE SCALE ANALYSIS]</scope>
    <source>
        <tissue>Leukemic T-cell</tissue>
    </source>
</reference>
<reference key="8">
    <citation type="journal article" date="2011" name="BMC Syst. Biol.">
        <title>Initial characterization of the human central proteome.</title>
        <authorList>
            <person name="Burkard T.R."/>
            <person name="Planyavsky M."/>
            <person name="Kaupe I."/>
            <person name="Breitwieser F.P."/>
            <person name="Buerckstuemmer T."/>
            <person name="Bennett K.L."/>
            <person name="Superti-Furga G."/>
            <person name="Colinge J."/>
        </authorList>
    </citation>
    <scope>IDENTIFICATION BY MASS SPECTROMETRY [LARGE SCALE ANALYSIS]</scope>
</reference>
<reference key="9">
    <citation type="journal article" date="2012" name="Proc. Natl. Acad. Sci. U.S.A.">
        <title>In vitro loading of human cohesin on DNA by the human Scc2-Scc4 loader complex.</title>
        <authorList>
            <person name="Bermudez V.P."/>
            <person name="Farina A."/>
            <person name="Higashi T.L."/>
            <person name="Du F."/>
            <person name="Tappin I."/>
            <person name="Takahashi T.S."/>
            <person name="Hurwitz J."/>
        </authorList>
    </citation>
    <scope>IDENTIFICATION IN A COHESIN COMPLEX WITH SMC1A; SMC3 AND RAD21</scope>
</reference>
<reference key="10">
    <citation type="journal article" date="2013" name="J. Proteome Res.">
        <title>Toward a comprehensive characterization of a human cancer cell phosphoproteome.</title>
        <authorList>
            <person name="Zhou H."/>
            <person name="Di Palma S."/>
            <person name="Preisinger C."/>
            <person name="Peng M."/>
            <person name="Polat A.N."/>
            <person name="Heck A.J."/>
            <person name="Mohammed S."/>
        </authorList>
    </citation>
    <scope>PHOSPHORYLATION [LARGE SCALE ANALYSIS] AT SER-756 AND SER-1093</scope>
    <scope>IDENTIFICATION BY MASS SPECTROMETRY [LARGE SCALE ANALYSIS]</scope>
    <source>
        <tissue>Cervix carcinoma</tissue>
        <tissue>Erythroleukemia</tissue>
    </source>
</reference>
<reference key="11">
    <citation type="journal article" date="2017" name="J. Med. Genet.">
        <title>STAG1 mutations cause a novel cohesinopathy characterised by unspecific syndromic intellectual disability.</title>
        <authorList>
            <person name="Lehalle D."/>
            <person name="Mosca-Boidron A.L."/>
            <person name="Begtrup A."/>
            <person name="Boute-Benejean O."/>
            <person name="Charles P."/>
            <person name="Cho M.T."/>
            <person name="Clarkson A."/>
            <person name="Devinsky O."/>
            <person name="Duffourd Y."/>
            <person name="Duplomb-Jego L."/>
            <person name="Gerard B."/>
            <person name="Jacquette A."/>
            <person name="Kuentz P."/>
            <person name="Masurel-Paulet A."/>
            <person name="McDougall C."/>
            <person name="Moutton S."/>
            <person name="Olivie H."/>
            <person name="Park S.M."/>
            <person name="Rauch A."/>
            <person name="Revencu N."/>
            <person name="Riviere J.B."/>
            <person name="Rubin K."/>
            <person name="Simonic I."/>
            <person name="Shears D.J."/>
            <person name="Smol T."/>
            <person name="Taylor Tavares A.L."/>
            <person name="Terhal P."/>
            <person name="Thevenon J."/>
            <person name="Van Gassen K."/>
            <person name="Vincent-Delorme C."/>
            <person name="Willemsen M.H."/>
            <person name="Wilson G.N."/>
            <person name="Zackai E."/>
            <person name="Zweier C."/>
            <person name="Callier P."/>
            <person name="Thauvin-Robinet C."/>
            <person name="Faivre L."/>
        </authorList>
    </citation>
    <scope>INVOLVEMENT IN MRD47</scope>
    <scope>VARIANTS MRD47 ARG-214; GLY-216; ARG-220; GLN-333; TRP-351; GLN-373; PRO-478 AND ARG-979</scope>
</reference>
<reference key="12">
    <citation type="journal article" date="2017" name="Nat. Struct. Mol. Biol.">
        <title>Site-specific mapping of the human SUMO proteome reveals co-modification with phosphorylation.</title>
        <authorList>
            <person name="Hendriks I.A."/>
            <person name="Lyon D."/>
            <person name="Young C."/>
            <person name="Jensen L.J."/>
            <person name="Vertegaal A.C."/>
            <person name="Nielsen M.L."/>
        </authorList>
    </citation>
    <scope>SUMOYLATION [LARGE SCALE ANALYSIS] AT LYS-1161</scope>
    <scope>IDENTIFICATION BY MASS SPECTROMETRY [LARGE SCALE ANALYSIS]</scope>
</reference>
<reference evidence="14" key="13">
    <citation type="journal article" date="2020" name="Science">
        <title>Cryo-EM structure of the human cohesin-NIPBL-DNA complex.</title>
        <authorList>
            <person name="Shi Z."/>
            <person name="Gao H."/>
            <person name="Bai X.C."/>
            <person name="Yu H."/>
        </authorList>
    </citation>
    <scope>STRUCTURE BY ELECTRON MICROSCOPY (5.30 ANGSTROMS)</scope>
    <scope>IDENTIFICATION IN THE COHESIN COMPLEX</scope>
    <scope>INTERACTION WITH NIPBL</scope>
</reference>
<reference key="14">
    <citation type="journal article" date="2019" name="Genet. Med.">
        <title>Clinical exome sequencing reveals locus heterogeneity and phenotypic variability of cohesinopathies.</title>
        <authorList>
            <consortium name="DDD Study"/>
            <person name="Yuan B."/>
            <person name="Neira J."/>
            <person name="Pehlivan D."/>
            <person name="Santiago-Sim T."/>
            <person name="Song X."/>
            <person name="Rosenfeld J."/>
            <person name="Posey J.E."/>
            <person name="Patel V."/>
            <person name="Jin W."/>
            <person name="Adam M.P."/>
            <person name="Baple E.L."/>
            <person name="Dean J."/>
            <person name="Fong C.T."/>
            <person name="Hickey S.E."/>
            <person name="Hudgins L."/>
            <person name="Leon E."/>
            <person name="Madan-Khetarpal S."/>
            <person name="Rawlins L."/>
            <person name="Rustad C.F."/>
            <person name="Stray-Pedersen A."/>
            <person name="Tveten K."/>
            <person name="Wenger O."/>
            <person name="Diaz J."/>
            <person name="Jenkins L."/>
            <person name="Martin L."/>
            <person name="McGuire M."/>
            <person name="Pietryga M."/>
            <person name="Ramsdell L."/>
            <person name="Slattery L."/>
            <person name="Abid F."/>
            <person name="Bertuch A.A."/>
            <person name="Grange D."/>
            <person name="Immken L."/>
            <person name="Schaaf C.P."/>
            <person name="Van Esch H."/>
            <person name="Bi W."/>
            <person name="Cheung S.W."/>
            <person name="Breman A.M."/>
            <person name="Smith J.L."/>
            <person name="Shaw C."/>
            <person name="Crosby A.H."/>
            <person name="Eng C."/>
            <person name="Yang Y."/>
            <person name="Lupski J.R."/>
            <person name="Xiao R."/>
            <person name="Liu P."/>
        </authorList>
    </citation>
    <scope>VARIANTS ILE-85 AND CYS-377</scope>
</reference>
<dbReference type="EMBL" id="Z75330">
    <property type="protein sequence ID" value="CAA99731.1"/>
    <property type="molecule type" value="mRNA"/>
</dbReference>
<dbReference type="EMBL" id="AC069514">
    <property type="status" value="NOT_ANNOTATED_CDS"/>
    <property type="molecule type" value="Genomic_DNA"/>
</dbReference>
<dbReference type="EMBL" id="AC069524">
    <property type="status" value="NOT_ANNOTATED_CDS"/>
    <property type="molecule type" value="Genomic_DNA"/>
</dbReference>
<dbReference type="EMBL" id="AC107425">
    <property type="status" value="NOT_ANNOTATED_CDS"/>
    <property type="molecule type" value="Genomic_DNA"/>
</dbReference>
<dbReference type="EMBL" id="AC117382">
    <property type="status" value="NOT_ANNOTATED_CDS"/>
    <property type="molecule type" value="Genomic_DNA"/>
</dbReference>
<dbReference type="EMBL" id="AC128712">
    <property type="status" value="NOT_ANNOTATED_CDS"/>
    <property type="molecule type" value="Genomic_DNA"/>
</dbReference>
<dbReference type="EMBL" id="BC017735">
    <property type="protein sequence ID" value="AAH17735.1"/>
    <property type="molecule type" value="mRNA"/>
</dbReference>
<dbReference type="EMBL" id="BC064699">
    <property type="protein sequence ID" value="AAH64699.1"/>
    <property type="molecule type" value="mRNA"/>
</dbReference>
<dbReference type="CCDS" id="CCDS3090.1">
    <molecule id="Q8WVM7-1"/>
</dbReference>
<dbReference type="RefSeq" id="NP_005853.2">
    <molecule id="Q8WVM7-1"/>
    <property type="nucleotide sequence ID" value="NM_005862.3"/>
</dbReference>
<dbReference type="PDB" id="5QSM">
    <property type="method" value="X-ray"/>
    <property type="resolution" value="2.74 A"/>
    <property type="chains" value="A/B=459-915"/>
</dbReference>
<dbReference type="PDB" id="5QSN">
    <property type="method" value="X-ray"/>
    <property type="resolution" value="2.66 A"/>
    <property type="chains" value="A/B=459-915"/>
</dbReference>
<dbReference type="PDB" id="5QSO">
    <property type="method" value="X-ray"/>
    <property type="resolution" value="2.70 A"/>
    <property type="chains" value="A/B=457-900"/>
</dbReference>
<dbReference type="PDB" id="5QSP">
    <property type="method" value="X-ray"/>
    <property type="resolution" value="2.89 A"/>
    <property type="chains" value="A/B=457-900"/>
</dbReference>
<dbReference type="PDB" id="5QSQ">
    <property type="method" value="X-ray"/>
    <property type="resolution" value="2.48 A"/>
    <property type="chains" value="A/B=459-915"/>
</dbReference>
<dbReference type="PDB" id="5QSR">
    <property type="method" value="X-ray"/>
    <property type="resolution" value="3.28 A"/>
    <property type="chains" value="A/B=459-915"/>
</dbReference>
<dbReference type="PDB" id="5QSS">
    <property type="method" value="X-ray"/>
    <property type="resolution" value="3.08 A"/>
    <property type="chains" value="A/B=459-915"/>
</dbReference>
<dbReference type="PDB" id="5QST">
    <property type="method" value="X-ray"/>
    <property type="resolution" value="2.58 A"/>
    <property type="chains" value="A/B/C/D=86-420"/>
</dbReference>
<dbReference type="PDB" id="5QSU">
    <property type="method" value="X-ray"/>
    <property type="resolution" value="2.73 A"/>
    <property type="chains" value="A/B/C/D=86-420"/>
</dbReference>
<dbReference type="PDB" id="5QSV">
    <property type="method" value="X-ray"/>
    <property type="resolution" value="2.76 A"/>
    <property type="chains" value="A/B/C/D=86-420"/>
</dbReference>
<dbReference type="PDB" id="5QSW">
    <property type="method" value="X-ray"/>
    <property type="resolution" value="3.03 A"/>
    <property type="chains" value="A/B/C/D=86-420"/>
</dbReference>
<dbReference type="PDB" id="5QSX">
    <property type="method" value="X-ray"/>
    <property type="resolution" value="2.34 A"/>
    <property type="chains" value="A/B/C/D=86-420"/>
</dbReference>
<dbReference type="PDB" id="5QSY">
    <property type="method" value="X-ray"/>
    <property type="resolution" value="2.40 A"/>
    <property type="chains" value="A/B=459-915"/>
</dbReference>
<dbReference type="PDB" id="5QSZ">
    <property type="method" value="X-ray"/>
    <property type="resolution" value="3.08 A"/>
    <property type="chains" value="A/B=459-915"/>
</dbReference>
<dbReference type="PDB" id="6QB5">
    <property type="method" value="X-ray"/>
    <property type="resolution" value="2.02 A"/>
    <property type="chains" value="A/B/C/D=86-420"/>
</dbReference>
<dbReference type="PDB" id="6R7O">
    <property type="method" value="X-ray"/>
    <property type="resolution" value="2.31 A"/>
    <property type="chains" value="A/B=459-915"/>
</dbReference>
<dbReference type="PDB" id="6RRC">
    <property type="method" value="X-ray"/>
    <property type="resolution" value="2.37 A"/>
    <property type="chains" value="A/C=86-420"/>
</dbReference>
<dbReference type="PDB" id="6RRK">
    <property type="method" value="X-ray"/>
    <property type="resolution" value="3.17 A"/>
    <property type="chains" value="A/B=459-915"/>
</dbReference>
<dbReference type="PDB" id="6WG3">
    <property type="method" value="EM"/>
    <property type="resolution" value="5.30 A"/>
    <property type="chains" value="D=1-1258"/>
</dbReference>
<dbReference type="PDB" id="7W1M">
    <property type="method" value="EM"/>
    <property type="resolution" value="6.50 A"/>
    <property type="chains" value="D=1-1258"/>
</dbReference>
<dbReference type="PDBsum" id="5QSM"/>
<dbReference type="PDBsum" id="5QSN"/>
<dbReference type="PDBsum" id="5QSO"/>
<dbReference type="PDBsum" id="5QSP"/>
<dbReference type="PDBsum" id="5QSQ"/>
<dbReference type="PDBsum" id="5QSR"/>
<dbReference type="PDBsum" id="5QSS"/>
<dbReference type="PDBsum" id="5QST"/>
<dbReference type="PDBsum" id="5QSU"/>
<dbReference type="PDBsum" id="5QSV"/>
<dbReference type="PDBsum" id="5QSW"/>
<dbReference type="PDBsum" id="5QSX"/>
<dbReference type="PDBsum" id="5QSY"/>
<dbReference type="PDBsum" id="5QSZ"/>
<dbReference type="PDBsum" id="6QB5"/>
<dbReference type="PDBsum" id="6R7O"/>
<dbReference type="PDBsum" id="6RRC"/>
<dbReference type="PDBsum" id="6RRK"/>
<dbReference type="PDBsum" id="6WG3"/>
<dbReference type="PDBsum" id="7W1M"/>
<dbReference type="EMDB" id="EMD-21658"/>
<dbReference type="EMDB" id="EMD-32252"/>
<dbReference type="SMR" id="Q8WVM7"/>
<dbReference type="BioGRID" id="115564">
    <property type="interactions" value="113"/>
</dbReference>
<dbReference type="ComplexPortal" id="CPX-5989">
    <property type="entry name" value="Nuclear mitotic cohesin complex, STAG1 variant"/>
</dbReference>
<dbReference type="CORUM" id="Q8WVM7"/>
<dbReference type="DIP" id="DIP-35421N"/>
<dbReference type="FunCoup" id="Q8WVM7">
    <property type="interactions" value="5008"/>
</dbReference>
<dbReference type="IntAct" id="Q8WVM7">
    <property type="interactions" value="47"/>
</dbReference>
<dbReference type="MINT" id="Q8WVM7"/>
<dbReference type="STRING" id="9606.ENSP00000372689"/>
<dbReference type="GlyCosmos" id="Q8WVM7">
    <property type="glycosylation" value="1 site, 1 glycan"/>
</dbReference>
<dbReference type="GlyGen" id="Q8WVM7">
    <property type="glycosylation" value="2 sites, 1 N-linked glycan (1 site), 1 O-linked glycan (1 site)"/>
</dbReference>
<dbReference type="iPTMnet" id="Q8WVM7"/>
<dbReference type="PhosphoSitePlus" id="Q8WVM7"/>
<dbReference type="SwissPalm" id="Q8WVM7"/>
<dbReference type="BioMuta" id="STAG1"/>
<dbReference type="DMDM" id="209572720"/>
<dbReference type="jPOST" id="Q8WVM7"/>
<dbReference type="MassIVE" id="Q8WVM7"/>
<dbReference type="PaxDb" id="9606-ENSP00000372689"/>
<dbReference type="PeptideAtlas" id="Q8WVM7"/>
<dbReference type="ProteomicsDB" id="66881"/>
<dbReference type="ProteomicsDB" id="74804">
    <molecule id="Q8WVM7-1"/>
</dbReference>
<dbReference type="Pumba" id="Q8WVM7"/>
<dbReference type="Antibodypedia" id="17829">
    <property type="antibodies" value="270 antibodies from 28 providers"/>
</dbReference>
<dbReference type="DNASU" id="10274"/>
<dbReference type="Ensembl" id="ENST00000236698.9">
    <molecule id="Q8WVM7-2"/>
    <property type="protein sequence ID" value="ENSP00000236698.5"/>
    <property type="gene ID" value="ENSG00000118007.13"/>
</dbReference>
<dbReference type="Ensembl" id="ENST00000383202.7">
    <molecule id="Q8WVM7-1"/>
    <property type="protein sequence ID" value="ENSP00000372689.2"/>
    <property type="gene ID" value="ENSG00000118007.13"/>
</dbReference>
<dbReference type="GeneID" id="10274"/>
<dbReference type="KEGG" id="hsa:10274"/>
<dbReference type="MANE-Select" id="ENST00000383202.7">
    <property type="protein sequence ID" value="ENSP00000372689.2"/>
    <property type="RefSeq nucleotide sequence ID" value="NM_005862.3"/>
    <property type="RefSeq protein sequence ID" value="NP_005853.2"/>
</dbReference>
<dbReference type="UCSC" id="uc003era.2">
    <molecule id="Q8WVM7-1"/>
    <property type="organism name" value="human"/>
</dbReference>
<dbReference type="AGR" id="HGNC:11354"/>
<dbReference type="CTD" id="10274"/>
<dbReference type="DisGeNET" id="10274"/>
<dbReference type="GeneCards" id="STAG1"/>
<dbReference type="HGNC" id="HGNC:11354">
    <property type="gene designation" value="STAG1"/>
</dbReference>
<dbReference type="HPA" id="ENSG00000118007">
    <property type="expression patterns" value="Low tissue specificity"/>
</dbReference>
<dbReference type="MalaCards" id="STAG1"/>
<dbReference type="MIM" id="604358">
    <property type="type" value="gene"/>
</dbReference>
<dbReference type="MIM" id="617635">
    <property type="type" value="phenotype"/>
</dbReference>
<dbReference type="neXtProt" id="NX_Q8WVM7"/>
<dbReference type="OpenTargets" id="ENSG00000118007"/>
<dbReference type="Orphanet" id="502434">
    <property type="disease" value="STAG1-related intellectual disability-facial dysmorphism-gastroesophageal reflux syndrome"/>
</dbReference>
<dbReference type="PharmGKB" id="PA36176"/>
<dbReference type="VEuPathDB" id="HostDB:ENSG00000118007"/>
<dbReference type="eggNOG" id="KOG2011">
    <property type="taxonomic scope" value="Eukaryota"/>
</dbReference>
<dbReference type="GeneTree" id="ENSGT00950000182972"/>
<dbReference type="HOGENOM" id="CLU_005067_1_0_1"/>
<dbReference type="InParanoid" id="Q8WVM7"/>
<dbReference type="OMA" id="XYYNDYG"/>
<dbReference type="OrthoDB" id="498590at2759"/>
<dbReference type="PAN-GO" id="Q8WVM7">
    <property type="GO annotations" value="5 GO annotations based on evolutionary models"/>
</dbReference>
<dbReference type="PhylomeDB" id="Q8WVM7"/>
<dbReference type="TreeFam" id="TF314604"/>
<dbReference type="PathwayCommons" id="Q8WVM7"/>
<dbReference type="Reactome" id="R-HSA-1221632">
    <property type="pathway name" value="Meiotic synapsis"/>
</dbReference>
<dbReference type="Reactome" id="R-HSA-2467813">
    <property type="pathway name" value="Separation of Sister Chromatids"/>
</dbReference>
<dbReference type="Reactome" id="R-HSA-2468052">
    <property type="pathway name" value="Establishment of Sister Chromatid Cohesion"/>
</dbReference>
<dbReference type="Reactome" id="R-HSA-2470946">
    <property type="pathway name" value="Cohesin Loading onto Chromatin"/>
</dbReference>
<dbReference type="Reactome" id="R-HSA-2500257">
    <property type="pathway name" value="Resolution of Sister Chromatid Cohesion"/>
</dbReference>
<dbReference type="Reactome" id="R-HSA-3108214">
    <property type="pathway name" value="SUMOylation of DNA damage response and repair proteins"/>
</dbReference>
<dbReference type="Reactome" id="R-HSA-9018519">
    <property type="pathway name" value="Estrogen-dependent gene expression"/>
</dbReference>
<dbReference type="SignaLink" id="Q8WVM7"/>
<dbReference type="SIGNOR" id="Q8WVM7"/>
<dbReference type="BioGRID-ORCS" id="10274">
    <property type="hits" value="61 hits in 1162 CRISPR screens"/>
</dbReference>
<dbReference type="CD-CODE" id="91857CE7">
    <property type="entry name" value="Nucleolus"/>
</dbReference>
<dbReference type="ChiTaRS" id="STAG1">
    <property type="organism name" value="human"/>
</dbReference>
<dbReference type="GeneWiki" id="STAG1"/>
<dbReference type="GenomeRNAi" id="10274"/>
<dbReference type="Pharos" id="Q8WVM7">
    <property type="development level" value="Tbio"/>
</dbReference>
<dbReference type="PRO" id="PR:Q8WVM7"/>
<dbReference type="Proteomes" id="UP000005640">
    <property type="component" value="Chromosome 3"/>
</dbReference>
<dbReference type="RNAct" id="Q8WVM7">
    <property type="molecule type" value="protein"/>
</dbReference>
<dbReference type="Bgee" id="ENSG00000118007">
    <property type="expression patterns" value="Expressed in calcaneal tendon and 215 other cell types or tissues"/>
</dbReference>
<dbReference type="ExpressionAtlas" id="Q8WVM7">
    <property type="expression patterns" value="baseline and differential"/>
</dbReference>
<dbReference type="GO" id="GO:0000785">
    <property type="term" value="C:chromatin"/>
    <property type="evidence" value="ECO:0000314"/>
    <property type="project" value="UniProtKB"/>
</dbReference>
<dbReference type="GO" id="GO:0005694">
    <property type="term" value="C:chromosome"/>
    <property type="evidence" value="ECO:0000304"/>
    <property type="project" value="Reactome"/>
</dbReference>
<dbReference type="GO" id="GO:0000775">
    <property type="term" value="C:chromosome, centromeric region"/>
    <property type="evidence" value="ECO:0000304"/>
    <property type="project" value="Reactome"/>
</dbReference>
<dbReference type="GO" id="GO:0005929">
    <property type="term" value="C:cilium"/>
    <property type="evidence" value="ECO:0000314"/>
    <property type="project" value="HPA"/>
</dbReference>
<dbReference type="GO" id="GO:0008278">
    <property type="term" value="C:cohesin complex"/>
    <property type="evidence" value="ECO:0000314"/>
    <property type="project" value="UniProtKB"/>
</dbReference>
<dbReference type="GO" id="GO:0005829">
    <property type="term" value="C:cytosol"/>
    <property type="evidence" value="ECO:0000304"/>
    <property type="project" value="Reactome"/>
</dbReference>
<dbReference type="GO" id="GO:0030892">
    <property type="term" value="C:mitotic cohesin complex"/>
    <property type="evidence" value="ECO:0000250"/>
    <property type="project" value="ComplexPortal"/>
</dbReference>
<dbReference type="GO" id="GO:0097431">
    <property type="term" value="C:mitotic spindle pole"/>
    <property type="evidence" value="ECO:0000314"/>
    <property type="project" value="UniProtKB"/>
</dbReference>
<dbReference type="GO" id="GO:0016604">
    <property type="term" value="C:nuclear body"/>
    <property type="evidence" value="ECO:0000314"/>
    <property type="project" value="HPA"/>
</dbReference>
<dbReference type="GO" id="GO:0016363">
    <property type="term" value="C:nuclear matrix"/>
    <property type="evidence" value="ECO:0000314"/>
    <property type="project" value="UniProtKB"/>
</dbReference>
<dbReference type="GO" id="GO:0005654">
    <property type="term" value="C:nucleoplasm"/>
    <property type="evidence" value="ECO:0000314"/>
    <property type="project" value="HPA"/>
</dbReference>
<dbReference type="GO" id="GO:0005634">
    <property type="term" value="C:nucleus"/>
    <property type="evidence" value="ECO:0000318"/>
    <property type="project" value="GO_Central"/>
</dbReference>
<dbReference type="GO" id="GO:0003682">
    <property type="term" value="F:chromatin binding"/>
    <property type="evidence" value="ECO:0000318"/>
    <property type="project" value="GO_Central"/>
</dbReference>
<dbReference type="GO" id="GO:0051301">
    <property type="term" value="P:cell division"/>
    <property type="evidence" value="ECO:0007669"/>
    <property type="project" value="UniProtKB-KW"/>
</dbReference>
<dbReference type="GO" id="GO:0034087">
    <property type="term" value="P:establishment of mitotic sister chromatid cohesion"/>
    <property type="evidence" value="ECO:0000303"/>
    <property type="project" value="ComplexPortal"/>
</dbReference>
<dbReference type="GO" id="GO:0090307">
    <property type="term" value="P:mitotic spindle assembly"/>
    <property type="evidence" value="ECO:0000315"/>
    <property type="project" value="UniProtKB"/>
</dbReference>
<dbReference type="GO" id="GO:0007062">
    <property type="term" value="P:sister chromatid cohesion"/>
    <property type="evidence" value="ECO:0000318"/>
    <property type="project" value="GO_Central"/>
</dbReference>
<dbReference type="InterPro" id="IPR016024">
    <property type="entry name" value="ARM-type_fold"/>
</dbReference>
<dbReference type="InterPro" id="IPR039662">
    <property type="entry name" value="Cohesin_Scc3/SA"/>
</dbReference>
<dbReference type="InterPro" id="IPR056396">
    <property type="entry name" value="HEAT_SCC3-SA"/>
</dbReference>
<dbReference type="InterPro" id="IPR020839">
    <property type="entry name" value="SCD"/>
</dbReference>
<dbReference type="InterPro" id="IPR013721">
    <property type="entry name" value="STAG"/>
</dbReference>
<dbReference type="PANTHER" id="PTHR11199:SF6">
    <property type="entry name" value="COHESIN SUBUNIT SA-1"/>
    <property type="match status" value="1"/>
</dbReference>
<dbReference type="PANTHER" id="PTHR11199">
    <property type="entry name" value="STROMAL ANTIGEN"/>
    <property type="match status" value="1"/>
</dbReference>
<dbReference type="Pfam" id="PF24571">
    <property type="entry name" value="HEAT_SCC3-SA"/>
    <property type="match status" value="1"/>
</dbReference>
<dbReference type="Pfam" id="PF21581">
    <property type="entry name" value="SCD"/>
    <property type="match status" value="1"/>
</dbReference>
<dbReference type="Pfam" id="PF08514">
    <property type="entry name" value="STAG"/>
    <property type="match status" value="1"/>
</dbReference>
<dbReference type="SUPFAM" id="SSF48371">
    <property type="entry name" value="ARM repeat"/>
    <property type="match status" value="1"/>
</dbReference>
<dbReference type="PROSITE" id="PS51425">
    <property type="entry name" value="SCD"/>
    <property type="match status" value="1"/>
</dbReference>
<sequence length="1258" mass="144427">MITSELPVLQDSTNETTAHSDAGSELEETEVKGKRKRGRPGRPPSTNKKPRKSPGEKSRIEAGIRGAGRGRANGHPQQNGEGEPVTLFEVVKLGKSAMQSVVDDWIESYKQDRDIALLDLINFFIQCSGCRGTVRIEMFRNMQNAEIIRKMTEEFDEDSGDYPLTMPGPQWKKFRSNFCEFIGVLIRQCQYSIIYDEYMMDTVISLLTGLSDSQVRAFRHTSTLAAMKLMTALVNVALNLSIHQDNTQRQYEAERNKMIGKRANERLELLLQKRKELQENQDEIENMMNSIFKGIFVHRYRDAIAEIRAICIEEIGVWMKMYSDAFLNDSYLKYVGWTLHDRQGEVRLKCLKALQSLYTNRELFPKLELFTNRFKDRIVSMTLDKEYDVAVEAIRLVTLILHGSEEALSNEDCENVYHLVYSAHRPVAVAAGEFLHKKLFSRHDPQAEEALAKRRGRNSPNGNLIRMLVLFFLESELHEHAAYLVDSLWESSQELLKDWECMTELLLEEPVQGEEAMSDRQESALIELMVCTIRQAAEAHPPVGRGTGKRVLTAKERKTQIDDRNKLTEHFIITLPMLLSKYSADAEKVANLLQIPQYFDLEIYSTGRMEKHLDALLKQIKFVVEKHVESDVLEACSKTYSILCSEEYTIQNRVDIARSQLIDEFVDRFNHSVEDLLQEGEEADDDDIYNVLSTLKRLTSFHNAHDLTKWDLFGNCYRLLKTGIEHGAMPEQIVVQALQCSHYSILWQLVKITDGSPSKEDLLVLRKTVKSFLAVCQQCLSNVNTPVKEQAFMLLCDLLMIFSHQLMTGGREGLQPLVFNPDTGLQSELLSFVMDHVFIDQDEENQSMEGDEEDEANKIEALHKRRNLLAAFSKLIIYDIVDMHAAADIFKHYMKYYNDYGDIIKETLSKTRQIDKIQCAKTLILSLQQLFNELVQEQGPNLDRTSAHVSGIKELARRFALTFGLDQIKTREAVATLHKDGIEFAFKYQNQKGQEYPPPNLAFLEVLSEFSSKLLRQDKKTVHSYLEKFLTEQMMERREDVWLPLISYRNSLVTGGEDDRMSVNSGSSSSKTSSVRNKKGRPPLHKKRVEDESLDNTWLNRTDTMIQTPGPLPAPQLTSTVLRENSRPMGDQIQEPESEHGSEPDFLHNPQMQISWLGQPKLEDLNRKDRTGMNYMKVRTGVRHAVRGLMEEDAEPIFEDVMMSSRSQLEDMNEEFEDTMVIDLPPSRNRRERAELRPDFFDSAAIIEDDSGFGMPMF</sequence>
<comment type="function">
    <text>Component of cohesin complex, a complex required for the cohesion of sister chromatids after DNA replication. The cohesin complex apparently forms a large proteinaceous ring within which sister chromatids can be trapped. At anaphase, the complex is cleaved and dissociates from chromatin, allowing sister chromatids to segregate. The cohesin complex may also play a role in spindle pole assembly during mitosis.</text>
</comment>
<comment type="subunit">
    <text evidence="3 6 7 10">Cohesin complexes are composed of a heterodimer between a SMC1 protein (SMC1A or SMC1B) and SMC3, which are attached via their hinge domain, and RAD21 which link them at their heads, and one STAG protein (STAG1, STAG2 or STAG3) (PubMed:11076961, PubMed:22628566, PubMed:32409525). In cohesin complexes, STAG1 is mutually exclusive with STAG2 and STAG3 (PubMed:11076961). Interacts directly with RAD21 in cohesin complex (By similarity). The cohesin complex interacts with the cohesin loading complex subunits NIPBL/Scc2 (via HEAT repeats) and MAU2/Scc4. NIPBL directly contacts all members of the complex, RAD21, SMC1A/B, SMC3 and STAG1 (PubMed:32409525).</text>
</comment>
<comment type="interaction">
    <interactant intactId="EBI-1175097">
        <id>Q8WVM7</id>
    </interactant>
    <interactant intactId="EBI-1175454">
        <id>Q29RF7</id>
        <label>PDS5A</label>
    </interactant>
    <organismsDiffer>false</organismsDiffer>
    <experiments>3</experiments>
</comment>
<comment type="interaction">
    <interactant intactId="EBI-1175097">
        <id>Q8WVM7</id>
    </interactant>
    <interactant intactId="EBI-1175604">
        <id>Q9NTI5</id>
        <label>PDS5B</label>
    </interactant>
    <organismsDiffer>false</organismsDiffer>
    <experiments>4</experiments>
</comment>
<comment type="interaction">
    <interactant intactId="EBI-1175097">
        <id>Q8WVM7</id>
    </interactant>
    <interactant intactId="EBI-80718">
        <id>Q9UQE7</id>
        <label>SMC3</label>
    </interactant>
    <organismsDiffer>false</organismsDiffer>
    <experiments>14</experiments>
</comment>
<comment type="interaction">
    <interactant intactId="EBI-1175097">
        <id>Q8WVM7</id>
    </interactant>
    <interactant intactId="EBI-1057252">
        <id>Q8N3U4</id>
        <label>STAG2</label>
    </interactant>
    <organismsDiffer>false</organismsDiffer>
    <experiments>6</experiments>
</comment>
<comment type="interaction">
    <interactant intactId="EBI-1175097">
        <id>Q8WVM7</id>
    </interactant>
    <interactant intactId="EBI-710997">
        <id>P54274</id>
        <label>TERF1</label>
    </interactant>
    <organismsDiffer>false</organismsDiffer>
    <experiments>4</experiments>
</comment>
<comment type="subcellular location">
    <subcellularLocation>
        <location>Nucleus</location>
    </subcellularLocation>
    <subcellularLocation>
        <location>Chromosome</location>
    </subcellularLocation>
    <subcellularLocation>
        <location>Chromosome</location>
        <location>Centromere</location>
    </subcellularLocation>
    <text>Associates with chromatin. Before prophase it is scattered along chromosome arms. During prophase, most of cohesin complexes dissociate from chromatin probably because of phosphorylation by PLK1, except at centromeres, where cohesin complexes remain. At anaphase, the RAD21 subunit of cohesin is cleaved, leading to the dissociation of the complex from chromosomes, allowing chromosome separation.</text>
</comment>
<comment type="alternative products">
    <event type="alternative splicing"/>
    <isoform>
        <id>Q8WVM7-1</id>
        <name>1</name>
        <sequence type="displayed"/>
    </isoform>
    <isoform>
        <id>Q8WVM7-2</id>
        <name>2</name>
        <sequence type="described" ref="VSP_054496"/>
    </isoform>
</comment>
<comment type="PTM">
    <text evidence="1">Phosphorylated by PLK1. The large dissociation of cohesin from chromosome arms during prophase is partly due to its phosphorylation (By similarity).</text>
</comment>
<comment type="disease" evidence="8">
    <disease id="DI-05063">
        <name>Intellectual developmental disorder, autosomal dominant 47</name>
        <acronym>MRD47</acronym>
        <description>A disorder characterized by significantly below average general intellectual functioning associated with impairments in adaptive behavior and manifested during the developmental period. MRD47 patients manifest developmental delay and mild to moderate intellectual disability, usually with delayed speech.</description>
        <dbReference type="MIM" id="617635"/>
    </disease>
    <text>The disease is caused by variants affecting the gene represented in this entry.</text>
</comment>
<comment type="similarity">
    <text evidence="13">Belongs to the SCC3 family.</text>
</comment>
<comment type="online information" name="STAG1 Gene Foundation">
    <link uri="https://stag1gene.org"/>
    <text>Support to STAG1 syndrome patients and researchers</text>
</comment>
<accession>Q8WVM7</accession>
<accession>O00539</accession>
<accession>Q6P275</accession>
<organism>
    <name type="scientific">Homo sapiens</name>
    <name type="common">Human</name>
    <dbReference type="NCBI Taxonomy" id="9606"/>
    <lineage>
        <taxon>Eukaryota</taxon>
        <taxon>Metazoa</taxon>
        <taxon>Chordata</taxon>
        <taxon>Craniata</taxon>
        <taxon>Vertebrata</taxon>
        <taxon>Euteleostomi</taxon>
        <taxon>Mammalia</taxon>
        <taxon>Eutheria</taxon>
        <taxon>Euarchontoglires</taxon>
        <taxon>Primates</taxon>
        <taxon>Haplorrhini</taxon>
        <taxon>Catarrhini</taxon>
        <taxon>Hominidae</taxon>
        <taxon>Homo</taxon>
    </lineage>
</organism>
<evidence type="ECO:0000250" key="1"/>
<evidence type="ECO:0000250" key="2">
    <source>
        <dbReference type="UniProtKB" id="Q9D3E6"/>
    </source>
</evidence>
<evidence type="ECO:0000250" key="3">
    <source>
        <dbReference type="UniProtKB" id="Q9DGN1"/>
    </source>
</evidence>
<evidence type="ECO:0000255" key="4">
    <source>
        <dbReference type="PROSITE-ProRule" id="PRU00750"/>
    </source>
</evidence>
<evidence type="ECO:0000256" key="5">
    <source>
        <dbReference type="SAM" id="MobiDB-lite"/>
    </source>
</evidence>
<evidence type="ECO:0000269" key="6">
    <source>
    </source>
</evidence>
<evidence type="ECO:0000269" key="7">
    <source>
    </source>
</evidence>
<evidence type="ECO:0000269" key="8">
    <source>
    </source>
</evidence>
<evidence type="ECO:0000269" key="9">
    <source>
    </source>
</evidence>
<evidence type="ECO:0000269" key="10">
    <source>
    </source>
</evidence>
<evidence type="ECO:0000303" key="11">
    <source>
    </source>
</evidence>
<evidence type="ECO:0000303" key="12">
    <source>
    </source>
</evidence>
<evidence type="ECO:0000305" key="13"/>
<evidence type="ECO:0007744" key="14">
    <source>
        <dbReference type="PDB" id="6WG3"/>
    </source>
</evidence>
<evidence type="ECO:0007744" key="15">
    <source>
    </source>
</evidence>
<evidence type="ECO:0007744" key="16">
    <source>
    </source>
</evidence>
<evidence type="ECO:0007744" key="17">
    <source>
    </source>
</evidence>
<evidence type="ECO:0007744" key="18">
    <source>
    </source>
</evidence>
<evidence type="ECO:0007829" key="19">
    <source>
        <dbReference type="PDB" id="5QSQ"/>
    </source>
</evidence>
<evidence type="ECO:0007829" key="20">
    <source>
        <dbReference type="PDB" id="5QSR"/>
    </source>
</evidence>
<evidence type="ECO:0007829" key="21">
    <source>
        <dbReference type="PDB" id="5QSS"/>
    </source>
</evidence>
<evidence type="ECO:0007829" key="22">
    <source>
        <dbReference type="PDB" id="6QB5"/>
    </source>
</evidence>
<evidence type="ECO:0007829" key="23">
    <source>
        <dbReference type="PDB" id="6R7O"/>
    </source>
</evidence>
<evidence type="ECO:0007829" key="24">
    <source>
        <dbReference type="PDB" id="6RRC"/>
    </source>
</evidence>
<evidence type="ECO:0007829" key="25">
    <source>
        <dbReference type="PDB" id="6RRK"/>
    </source>
</evidence>